<keyword id="KW-1015">Disulfide bond</keyword>
<keyword id="KW-0325">Glycoprotein</keyword>
<keyword id="KW-0348">Hemagglutinin</keyword>
<keyword id="KW-1032">Host cell membrane</keyword>
<keyword id="KW-1043">Host membrane</keyword>
<keyword id="KW-0378">Hydrolase</keyword>
<keyword id="KW-0472">Membrane</keyword>
<keyword id="KW-0732">Signal</keyword>
<keyword id="KW-0812">Transmembrane</keyword>
<keyword id="KW-1133">Transmembrane helix</keyword>
<keyword id="KW-0261">Viral envelope protein</keyword>
<keyword id="KW-0946">Virion</keyword>
<reference key="1">
    <citation type="journal article" date="1997" name="Virology">
        <title>Hemagglutinin-esterase, a novel structural protein of torovirus.</title>
        <authorList>
            <person name="Cornelissen L.A.H.M."/>
            <person name="Wierda C.M.H."/>
            <person name="van der Meer F.J."/>
            <person name="Herrewegh A.A.P.M."/>
            <person name="Horzinek M.C."/>
            <person name="Egberink H.F."/>
            <person name="de Groot R.J."/>
        </authorList>
    </citation>
    <scope>NUCLEOTIDE SEQUENCE [GENOMIC RNA]</scope>
    <scope>CHARACTERIZATION</scope>
    <scope>SUBCELLULAR LOCATION</scope>
</reference>
<reference key="2">
    <citation type="journal article" date="2005" name="J. Biol. Chem.">
        <title>Nidovirus sialate-O-acetylesterases: evolution and substrate specificity of coronaviral and toroviral receptor-destroying enzymes.</title>
        <authorList>
            <person name="Smits S.L."/>
            <person name="Gerwig G.J."/>
            <person name="van Vliet A.L."/>
            <person name="Lissenberg A."/>
            <person name="Briza P."/>
            <person name="Kamerling J.P."/>
            <person name="Vlasak R."/>
            <person name="de Groot R.J."/>
        </authorList>
    </citation>
    <scope>CHARACTERIZATION</scope>
</reference>
<comment type="function">
    <text>Structural protein that makes short spikes at the surface of the virus. Contains receptor binding and receptor-destroying activities. Mediates de-O-acetylation of N-acetyl-9-di-O-acetylneuraminic acid, which is probably the receptor determinant recognized by the virus on the surface of erythrocytes and susceptible cells. Also hydrolyzes 5-N-acetyl-4-O-acetylneuraminic acid and N-acetyl-9-O-acetylneuraminic acid, but displays a substrate preference for N-acetyl-9-di-O-acetylneuraminic acid. This receptor-destroying activity is important for virus release as it probably helps preventing self-aggregation and ensures the efficient spread of the progeny virus from cell to cell. May serve as a secondary viral attachment protein for initiating infection, the spike protein being the major one. Seems to be a 'luxury' protein that is not absolutely necessary for virus infection in culture. However, its presence in the virus may alter its pathogenicity. May become a target for both the humoral and the cellular branches of the immune system.</text>
</comment>
<comment type="catalytic activity">
    <reaction>
        <text>N-acetyl-9-O-acetylneuraminate + H2O = N-acetylneuraminate + acetate + H(+)</text>
        <dbReference type="Rhea" id="RHEA:22600"/>
        <dbReference type="ChEBI" id="CHEBI:15377"/>
        <dbReference type="ChEBI" id="CHEBI:15378"/>
        <dbReference type="ChEBI" id="CHEBI:28999"/>
        <dbReference type="ChEBI" id="CHEBI:30089"/>
        <dbReference type="ChEBI" id="CHEBI:35418"/>
        <dbReference type="EC" id="3.1.1.53"/>
    </reaction>
</comment>
<comment type="catalytic activity">
    <reaction>
        <text>N-acetyl-4-O-acetylneuraminate + H2O = N-acetylneuraminate + acetate + H(+)</text>
        <dbReference type="Rhea" id="RHEA:25564"/>
        <dbReference type="ChEBI" id="CHEBI:15377"/>
        <dbReference type="ChEBI" id="CHEBI:15378"/>
        <dbReference type="ChEBI" id="CHEBI:29006"/>
        <dbReference type="ChEBI" id="CHEBI:30089"/>
        <dbReference type="ChEBI" id="CHEBI:35418"/>
        <dbReference type="EC" id="3.1.1.53"/>
    </reaction>
</comment>
<comment type="subcellular location">
    <subcellularLocation>
        <location evidence="3">Virion membrane</location>
        <topology evidence="3">Single-pass type I membrane protein</topology>
    </subcellularLocation>
    <subcellularLocation>
        <location evidence="3">Host cell membrane</location>
        <topology evidence="3">Single-pass type I membrane protein</topology>
    </subcellularLocation>
    <text evidence="1">In infected cells becomes incorporated into the envelope of virions during virus assembly at the endoplasmic reticulum and cis Golgi. However, some may escape incorporation into virions and subsequently migrate to the cell surface (By similarity).</text>
</comment>
<comment type="PTM">
    <text evidence="3">N-glycosylated.</text>
</comment>
<comment type="similarity">
    <text evidence="3">Belongs to the influenza type C/coronaviruses hemagglutinin-esterase family.</text>
</comment>
<sequence>MLSLILFFPSFAFAATPVTPYYGPGHITFDWCGFGDSRSDCTNPQSPMSLDIPQQLCPKFSSKSSSSMFLSLHWNNHSSFVSYDYFNCGVEKVFYEGVNFSPRKQYSCWDEGVDGWIELKTRFYTKLYQMATTSRCIKLIQLQAPSSLPTLQAGVCRTNKQLPDNPRLALLSDTVPTSVQFVLPGSSGTTICTKHLVPFCYLNHGCFTTGGSCLPFGVSYVSDSFYYGYYDATPQIGSTESHDYVCDYLFMEPGTYNASTVGKFLVYPTKSYCMDTMNITVPVQAVQSIWSEQYASDDAIGQACKAPYCIFYNKTTPYTVTNGSDANHGDDEVRMMMQGLLRNSSCISPQGSTPLALYSTEMIYEPNYGSCPQFYKLFDTSGNENIDVISSSYFVATWVLLVVVVILIFVIISFFC</sequence>
<accession>P0C0W0</accession>
<accession>O39517</accession>
<organism>
    <name type="scientific">Breda virus 2</name>
    <name type="common">BRV-2</name>
    <dbReference type="NCBI Taxonomy" id="360394"/>
    <lineage>
        <taxon>Viruses</taxon>
        <taxon>Riboviria</taxon>
        <taxon>Orthornavirae</taxon>
        <taxon>Pisuviricota</taxon>
        <taxon>Pisoniviricetes</taxon>
        <taxon>Nidovirales</taxon>
        <taxon>Tornidovirineae</taxon>
        <taxon>Tobaniviridae</taxon>
        <taxon>Torovirinae</taxon>
        <taxon>Torovirus</taxon>
        <taxon>Renitovirus</taxon>
        <taxon>Bovine torovirus</taxon>
    </lineage>
</organism>
<evidence type="ECO:0000250" key="1"/>
<evidence type="ECO:0000255" key="2"/>
<evidence type="ECO:0000305" key="3"/>
<proteinExistence type="evidence at protein level"/>
<organismHost>
    <name type="scientific">Bos taurus</name>
    <name type="common">Bovine</name>
    <dbReference type="NCBI Taxonomy" id="9913"/>
</organismHost>
<gene>
    <name type="primary">HE</name>
</gene>
<dbReference type="EC" id="3.1.1.53"/>
<dbReference type="EMBL" id="Y10866">
    <property type="protein sequence ID" value="CAA71819.1"/>
    <property type="molecule type" value="Genomic_RNA"/>
</dbReference>
<dbReference type="SMR" id="P0C0W0"/>
<dbReference type="GlyCosmos" id="P0C0W0">
    <property type="glycosylation" value="6 sites, No reported glycans"/>
</dbReference>
<dbReference type="GO" id="GO:0020002">
    <property type="term" value="C:host cell plasma membrane"/>
    <property type="evidence" value="ECO:0007669"/>
    <property type="project" value="UniProtKB-SubCell"/>
</dbReference>
<dbReference type="GO" id="GO:0016020">
    <property type="term" value="C:membrane"/>
    <property type="evidence" value="ECO:0007669"/>
    <property type="project" value="UniProtKB-KW"/>
</dbReference>
<dbReference type="GO" id="GO:0019031">
    <property type="term" value="C:viral envelope"/>
    <property type="evidence" value="ECO:0007669"/>
    <property type="project" value="UniProtKB-KW"/>
</dbReference>
<dbReference type="GO" id="GO:0055036">
    <property type="term" value="C:virion membrane"/>
    <property type="evidence" value="ECO:0007669"/>
    <property type="project" value="UniProtKB-SubCell"/>
</dbReference>
<dbReference type="GO" id="GO:0046789">
    <property type="term" value="F:host cell surface receptor binding"/>
    <property type="evidence" value="ECO:0007669"/>
    <property type="project" value="InterPro"/>
</dbReference>
<dbReference type="GO" id="GO:0106331">
    <property type="term" value="F:sialate 4-O-acetylesterase activity"/>
    <property type="evidence" value="ECO:0007669"/>
    <property type="project" value="RHEA"/>
</dbReference>
<dbReference type="GO" id="GO:0106330">
    <property type="term" value="F:sialate 9-O-acetylesterase activity"/>
    <property type="evidence" value="ECO:0007669"/>
    <property type="project" value="RHEA"/>
</dbReference>
<dbReference type="GO" id="GO:0019064">
    <property type="term" value="P:fusion of virus membrane with host plasma membrane"/>
    <property type="evidence" value="ECO:0007669"/>
    <property type="project" value="InterPro"/>
</dbReference>
<dbReference type="InterPro" id="IPR008980">
    <property type="entry name" value="Capsid_hemagglutn"/>
</dbReference>
<dbReference type="InterPro" id="IPR007142">
    <property type="entry name" value="Hemagglutn-estrase_core"/>
</dbReference>
<dbReference type="InterPro" id="IPR003860">
    <property type="entry name" value="Hemagglutn-estrase_hemagglutn"/>
</dbReference>
<dbReference type="Pfam" id="PF03996">
    <property type="entry name" value="Hema_esterase"/>
    <property type="match status" value="1"/>
</dbReference>
<dbReference type="Pfam" id="PF02710">
    <property type="entry name" value="Hema_HEFG"/>
    <property type="match status" value="1"/>
</dbReference>
<dbReference type="SUPFAM" id="SSF52266">
    <property type="entry name" value="SGNH hydrolase"/>
    <property type="match status" value="1"/>
</dbReference>
<dbReference type="SUPFAM" id="SSF49818">
    <property type="entry name" value="Viral protein domain"/>
    <property type="match status" value="1"/>
</dbReference>
<protein>
    <recommendedName>
        <fullName>Hemagglutinin-esterase</fullName>
        <shortName>HE protein</shortName>
        <ecNumber>3.1.1.53</ecNumber>
    </recommendedName>
    <alternativeName>
        <fullName>E3 glycoprotein</fullName>
    </alternativeName>
</protein>
<feature type="signal peptide" evidence="2">
    <location>
        <begin position="1"/>
        <end position="14"/>
    </location>
</feature>
<feature type="chain" id="PRO_0000045399" description="Hemagglutinin-esterase">
    <location>
        <begin position="15"/>
        <end position="416"/>
    </location>
</feature>
<feature type="topological domain" description="Virion surface" evidence="2">
    <location>
        <begin position="15"/>
        <end position="393"/>
    </location>
</feature>
<feature type="transmembrane region" description="Helical" evidence="2">
    <location>
        <begin position="394"/>
        <end position="414"/>
    </location>
</feature>
<feature type="topological domain" description="Intravirion" evidence="2">
    <location>
        <begin position="415"/>
        <end position="416"/>
    </location>
</feature>
<feature type="region of interest" description="Esterase domain first part" evidence="1">
    <location>
        <begin position="4"/>
        <end position="121"/>
    </location>
</feature>
<feature type="region of interest" description="Receptor binding" evidence="1">
    <location>
        <begin position="122"/>
        <end position="263"/>
    </location>
</feature>
<feature type="region of interest" description="Esterase domain second part" evidence="1">
    <location>
        <begin position="264"/>
        <end position="379"/>
    </location>
</feature>
<feature type="active site" description="Nucleophile" evidence="1">
    <location>
        <position position="37"/>
    </location>
</feature>
<feature type="active site" description="Charge relay system" evidence="1">
    <location>
        <position position="325"/>
    </location>
</feature>
<feature type="active site" description="Charge relay system" evidence="1">
    <location>
        <position position="328"/>
    </location>
</feature>
<feature type="glycosylation site" description="N-linked (GlcNAc...) asparagine; by host" evidence="2">
    <location>
        <position position="76"/>
    </location>
</feature>
<feature type="glycosylation site" description="N-linked (GlcNAc...) asparagine; by host" evidence="2">
    <location>
        <position position="257"/>
    </location>
</feature>
<feature type="glycosylation site" description="N-linked (GlcNAc...) asparagine; by host" evidence="2">
    <location>
        <position position="278"/>
    </location>
</feature>
<feature type="glycosylation site" description="N-linked (GlcNAc...) asparagine; by host" evidence="2">
    <location>
        <position position="313"/>
    </location>
</feature>
<feature type="glycosylation site" description="N-linked (GlcNAc...) asparagine; by host" evidence="2">
    <location>
        <position position="322"/>
    </location>
</feature>
<feature type="glycosylation site" description="N-linked (GlcNAc...) asparagine; by host" evidence="2">
    <location>
        <position position="343"/>
    </location>
</feature>
<feature type="disulfide bond" evidence="1">
    <location>
        <begin position="41"/>
        <end position="57"/>
    </location>
</feature>
<feature type="disulfide bond" evidence="1">
    <location>
        <begin position="108"/>
        <end position="156"/>
    </location>
</feature>
<feature type="disulfide bond" evidence="1">
    <location>
        <begin position="192"/>
        <end position="273"/>
    </location>
</feature>
<feature type="disulfide bond" evidence="1">
    <location>
        <begin position="200"/>
        <end position="246"/>
    </location>
</feature>
<feature type="disulfide bond" evidence="1">
    <location>
        <begin position="304"/>
        <end position="309"/>
    </location>
</feature>
<feature type="disulfide bond" evidence="1">
    <location>
        <begin position="346"/>
        <end position="371"/>
    </location>
</feature>
<name>HEMA_BRV2</name>